<feature type="chain" id="PRO_0000085470" description="Protein Vpr">
    <location>
        <begin position="1"/>
        <end position="101"/>
    </location>
</feature>
<feature type="region of interest" description="Disordered" evidence="2">
    <location>
        <begin position="80"/>
        <end position="101"/>
    </location>
</feature>
<feature type="modified residue" description="Phosphoserine; by host" evidence="1">
    <location>
        <position position="80"/>
    </location>
</feature>
<reference key="1">
    <citation type="journal article" date="1990" name="Nature">
        <title>Sequence analysis and acute pathogenicity of molecularly cloned SIVSMM-PBj14.</title>
        <authorList>
            <person name="Dewhurst S."/>
            <person name="Embretson J.E."/>
            <person name="Anderson D.C."/>
            <person name="Mullins J.I."/>
            <person name="Fultz P.N."/>
        </authorList>
    </citation>
    <scope>NUCLEOTIDE SEQUENCE [GENOMIC RNA]</scope>
</reference>
<reference key="2">
    <citation type="journal article" date="1992" name="AIDS Res. Hum. Retroviruses">
        <title>Molecular clones from a non-acutely pathogenic derivative of SIVsmmPBj14: characterization and comparison to acutely pathogenic clones.</title>
        <authorList>
            <person name="Dewhurst S."/>
            <person name="Embretson J.E."/>
            <person name="Fultz P.N."/>
            <person name="Mullins J.I."/>
        </authorList>
    </citation>
    <scope>NUCLEOTIDE SEQUENCE [GENOMIC RNA]</scope>
</reference>
<reference key="3">
    <citation type="journal article" date="1996" name="EMBO J.">
        <title>Nuclear import and cell cycle arrest functions of the HIV-1 Vpr protein are encoded by two separate genes in HIV-2/SIV(SM).</title>
        <authorList>
            <person name="Fletcher T.M. III"/>
            <person name="Brichacek B."/>
            <person name="Sharova N."/>
            <person name="Newman M.A."/>
            <person name="Stivahtis G."/>
            <person name="Sharp P.M."/>
            <person name="Emerman M."/>
            <person name="Hahn B.H."/>
            <person name="Stevenson M."/>
        </authorList>
    </citation>
    <scope>FUNCTION</scope>
</reference>
<reference key="4">
    <citation type="journal article" date="1998" name="Virology">
        <title>Differential association of uracil DNA glycosylase with SIVSM Vpr and Vpx proteins.</title>
        <authorList>
            <person name="Sleigh R."/>
            <person name="Sharkey M."/>
            <person name="Newman M.A."/>
            <person name="Hahn B."/>
            <person name="Stevenson M."/>
        </authorList>
    </citation>
    <scope>INTERACTION WITH HOST UNG</scope>
</reference>
<organismHost>
    <name type="scientific">Cercopithecidae</name>
    <name type="common">Old World monkeys</name>
    <dbReference type="NCBI Taxonomy" id="9527"/>
</organismHost>
<dbReference type="EMBL" id="L03295">
    <property type="protein sequence ID" value="AAB59773.1"/>
    <property type="molecule type" value="Genomic_RNA"/>
</dbReference>
<dbReference type="EMBL" id="L03298">
    <property type="protein sequence ID" value="AAA47780.1"/>
    <property type="molecule type" value="Genomic_RNA"/>
</dbReference>
<dbReference type="EMBL" id="M31325">
    <property type="protein sequence ID" value="AAA47756.1"/>
    <property type="molecule type" value="Genomic_RNA"/>
</dbReference>
<dbReference type="SMR" id="P19509"/>
<dbReference type="TCDB" id="1.A.42.1.3">
    <property type="family name" value="the hiv viral protein r (vpr) family"/>
</dbReference>
<dbReference type="Proteomes" id="UP000007221">
    <property type="component" value="Segment"/>
</dbReference>
<dbReference type="GO" id="GO:0043657">
    <property type="term" value="C:host cell"/>
    <property type="evidence" value="ECO:0007669"/>
    <property type="project" value="GOC"/>
</dbReference>
<dbReference type="GO" id="GO:0042025">
    <property type="term" value="C:host cell nucleus"/>
    <property type="evidence" value="ECO:0007669"/>
    <property type="project" value="UniProtKB-SubCell"/>
</dbReference>
<dbReference type="GO" id="GO:0044423">
    <property type="term" value="C:virion component"/>
    <property type="evidence" value="ECO:0007669"/>
    <property type="project" value="UniProtKB-KW"/>
</dbReference>
<dbReference type="GO" id="GO:0046718">
    <property type="term" value="P:symbiont entry into host cell"/>
    <property type="evidence" value="ECO:0007669"/>
    <property type="project" value="UniProtKB-KW"/>
</dbReference>
<dbReference type="GO" id="GO:0075732">
    <property type="term" value="P:viral penetration into host nucleus"/>
    <property type="evidence" value="ECO:0007669"/>
    <property type="project" value="UniProtKB-KW"/>
</dbReference>
<dbReference type="Gene3D" id="6.10.210.10">
    <property type="match status" value="1"/>
</dbReference>
<dbReference type="Gene3D" id="1.20.5.90">
    <property type="entry name" value="VpR/VpX protein, C-terminal domain"/>
    <property type="match status" value="1"/>
</dbReference>
<dbReference type="InterPro" id="IPR000012">
    <property type="entry name" value="RetroV_VpR/X"/>
</dbReference>
<dbReference type="Pfam" id="PF00522">
    <property type="entry name" value="VPR"/>
    <property type="match status" value="1"/>
</dbReference>
<dbReference type="PRINTS" id="PR00444">
    <property type="entry name" value="HIVVPRVPX"/>
</dbReference>
<organism>
    <name type="scientific">Simian immunodeficiency virus (isolate PBj14/BCL-3)</name>
    <name type="common">SIV-sm</name>
    <name type="synonym">Simian immunodeficiency virus sooty mangabey monkey</name>
    <dbReference type="NCBI Taxonomy" id="11738"/>
    <lineage>
        <taxon>Viruses</taxon>
        <taxon>Riboviria</taxon>
        <taxon>Pararnavirae</taxon>
        <taxon>Artverviricota</taxon>
        <taxon>Revtraviricetes</taxon>
        <taxon>Ortervirales</taxon>
        <taxon>Retroviridae</taxon>
        <taxon>Orthoretrovirinae</taxon>
        <taxon>Lentivirus</taxon>
        <taxon>Simian immunodeficiency virus</taxon>
    </lineage>
</organism>
<proteinExistence type="evidence at protein level"/>
<comment type="function">
    <text evidence="3">Stimulates gene expression driven by the HIV-2 LTR. Prevents infected cells from undergoing mitosis and proliferating, by inducing arrest or delay in the G2 phase of the cell cycle. Cell cycle arrest creates a favorable environment for maximizing viral expression and production.</text>
</comment>
<comment type="subunit">
    <text evidence="4">Interacts with human UNG.</text>
</comment>
<comment type="subcellular location">
    <subcellularLocation>
        <location>Virion</location>
    </subcellularLocation>
    <subcellularLocation>
        <location evidence="1">Host nucleus</location>
    </subcellularLocation>
</comment>
<accession>P19509</accession>
<name>VPR_SIVSP</name>
<protein>
    <recommendedName>
        <fullName>Protein Vpr</fullName>
    </recommendedName>
    <alternativeName>
        <fullName>R ORF protein</fullName>
    </alternativeName>
    <alternativeName>
        <fullName>Viral protein R</fullName>
    </alternativeName>
</protein>
<sequence length="101" mass="11429">MTERPPEDEAPQREPWDEWVVEVLEEIKEEALNHFDPRLLTALGNYIYDRHGDTLEGAGELIRILQRALFIHFRGGCRHSRIGQSGGGNPLSTIPPSRGVL</sequence>
<evidence type="ECO:0000250" key="1"/>
<evidence type="ECO:0000256" key="2">
    <source>
        <dbReference type="SAM" id="MobiDB-lite"/>
    </source>
</evidence>
<evidence type="ECO:0000269" key="3">
    <source>
    </source>
</evidence>
<evidence type="ECO:0000269" key="4">
    <source>
    </source>
</evidence>
<keyword id="KW-0010">Activator</keyword>
<keyword id="KW-0014">AIDS</keyword>
<keyword id="KW-0131">Cell cycle</keyword>
<keyword id="KW-1048">Host nucleus</keyword>
<keyword id="KW-0945">Host-virus interaction</keyword>
<keyword id="KW-0597">Phosphoprotein</keyword>
<keyword id="KW-0804">Transcription</keyword>
<keyword id="KW-0805">Transcription regulation</keyword>
<keyword id="KW-1163">Viral penetration into host nucleus</keyword>
<keyword id="KW-0946">Virion</keyword>
<keyword id="KW-1160">Virus entry into host cell</keyword>
<gene>
    <name type="primary">vpr</name>
</gene>